<proteinExistence type="inferred from homology"/>
<evidence type="ECO:0000255" key="1">
    <source>
        <dbReference type="HAMAP-Rule" id="MF_01632"/>
    </source>
</evidence>
<feature type="chain" id="PRO_0000240570" description="Chorismate pyruvate-lyase">
    <location>
        <begin position="1"/>
        <end position="165"/>
    </location>
</feature>
<feature type="binding site" evidence="1">
    <location>
        <position position="77"/>
    </location>
    <ligand>
        <name>substrate</name>
    </ligand>
</feature>
<feature type="binding site" evidence="1">
    <location>
        <position position="115"/>
    </location>
    <ligand>
        <name>substrate</name>
    </ligand>
</feature>
<feature type="binding site" evidence="1">
    <location>
        <position position="156"/>
    </location>
    <ligand>
        <name>substrate</name>
    </ligand>
</feature>
<name>UBIC_SALTI</name>
<accession>Q8Z1T7</accession>
<accession>Q7C5N8</accession>
<keyword id="KW-0963">Cytoplasm</keyword>
<keyword id="KW-0456">Lyase</keyword>
<keyword id="KW-0670">Pyruvate</keyword>
<keyword id="KW-0831">Ubiquinone biosynthesis</keyword>
<protein>
    <recommendedName>
        <fullName evidence="1">Chorismate pyruvate-lyase</fullName>
        <shortName evidence="1">CL</shortName>
        <shortName evidence="1">CPL</shortName>
        <ecNumber evidence="1">4.1.3.40</ecNumber>
    </recommendedName>
</protein>
<gene>
    <name evidence="1" type="primary">ubiC</name>
    <name type="ordered locus">STY4429</name>
    <name type="ordered locus">t4139</name>
</gene>
<organism>
    <name type="scientific">Salmonella typhi</name>
    <dbReference type="NCBI Taxonomy" id="90370"/>
    <lineage>
        <taxon>Bacteria</taxon>
        <taxon>Pseudomonadati</taxon>
        <taxon>Pseudomonadota</taxon>
        <taxon>Gammaproteobacteria</taxon>
        <taxon>Enterobacterales</taxon>
        <taxon>Enterobacteriaceae</taxon>
        <taxon>Salmonella</taxon>
    </lineage>
</organism>
<dbReference type="EC" id="4.1.3.40" evidence="1"/>
<dbReference type="EMBL" id="AL513382">
    <property type="protein sequence ID" value="CAD09217.1"/>
    <property type="molecule type" value="Genomic_DNA"/>
</dbReference>
<dbReference type="EMBL" id="AE014613">
    <property type="protein sequence ID" value="AAO71603.1"/>
    <property type="molecule type" value="Genomic_DNA"/>
</dbReference>
<dbReference type="RefSeq" id="NP_458531.1">
    <property type="nucleotide sequence ID" value="NC_003198.1"/>
</dbReference>
<dbReference type="RefSeq" id="WP_000019220.1">
    <property type="nucleotide sequence ID" value="NZ_WSUR01000027.1"/>
</dbReference>
<dbReference type="SMR" id="Q8Z1T7"/>
<dbReference type="STRING" id="220341.gene:17588261"/>
<dbReference type="KEGG" id="stt:t4139"/>
<dbReference type="KEGG" id="sty:STY4429"/>
<dbReference type="PATRIC" id="fig|220341.7.peg.4529"/>
<dbReference type="eggNOG" id="COG3161">
    <property type="taxonomic scope" value="Bacteria"/>
</dbReference>
<dbReference type="HOGENOM" id="CLU_096824_1_0_6"/>
<dbReference type="OMA" id="ELWGRRS"/>
<dbReference type="OrthoDB" id="9789493at2"/>
<dbReference type="UniPathway" id="UPA00232"/>
<dbReference type="Proteomes" id="UP000000541">
    <property type="component" value="Chromosome"/>
</dbReference>
<dbReference type="Proteomes" id="UP000002670">
    <property type="component" value="Chromosome"/>
</dbReference>
<dbReference type="GO" id="GO:0005829">
    <property type="term" value="C:cytosol"/>
    <property type="evidence" value="ECO:0007669"/>
    <property type="project" value="TreeGrafter"/>
</dbReference>
<dbReference type="GO" id="GO:0008813">
    <property type="term" value="F:chorismate lyase activity"/>
    <property type="evidence" value="ECO:0007669"/>
    <property type="project" value="UniProtKB-UniRule"/>
</dbReference>
<dbReference type="GO" id="GO:0042866">
    <property type="term" value="P:pyruvate biosynthetic process"/>
    <property type="evidence" value="ECO:0007669"/>
    <property type="project" value="UniProtKB-UniRule"/>
</dbReference>
<dbReference type="GO" id="GO:0006744">
    <property type="term" value="P:ubiquinone biosynthetic process"/>
    <property type="evidence" value="ECO:0007669"/>
    <property type="project" value="UniProtKB-UniRule"/>
</dbReference>
<dbReference type="FunFam" id="3.40.1410.10:FF:000002">
    <property type="entry name" value="Chorismate pyruvate-lyase"/>
    <property type="match status" value="1"/>
</dbReference>
<dbReference type="Gene3D" id="3.40.1410.10">
    <property type="entry name" value="Chorismate lyase-like"/>
    <property type="match status" value="1"/>
</dbReference>
<dbReference type="HAMAP" id="MF_01632">
    <property type="entry name" value="UbiC"/>
    <property type="match status" value="1"/>
</dbReference>
<dbReference type="InterPro" id="IPR007440">
    <property type="entry name" value="Chorismate--pyruvate_lyase"/>
</dbReference>
<dbReference type="InterPro" id="IPR028978">
    <property type="entry name" value="Chorismate_lyase_/UTRA_dom_sf"/>
</dbReference>
<dbReference type="NCBIfam" id="NF008656">
    <property type="entry name" value="PRK11655.1"/>
    <property type="match status" value="1"/>
</dbReference>
<dbReference type="PANTHER" id="PTHR38683">
    <property type="entry name" value="CHORISMATE PYRUVATE-LYASE"/>
    <property type="match status" value="1"/>
</dbReference>
<dbReference type="PANTHER" id="PTHR38683:SF1">
    <property type="entry name" value="CHORISMATE PYRUVATE-LYASE"/>
    <property type="match status" value="1"/>
</dbReference>
<dbReference type="Pfam" id="PF04345">
    <property type="entry name" value="Chor_lyase"/>
    <property type="match status" value="1"/>
</dbReference>
<dbReference type="SUPFAM" id="SSF64288">
    <property type="entry name" value="Chorismate lyase-like"/>
    <property type="match status" value="1"/>
</dbReference>
<comment type="function">
    <text evidence="1">Removes the pyruvyl group from chorismate, with concomitant aromatization of the ring, to provide 4-hydroxybenzoate (4HB) for the ubiquinone pathway.</text>
</comment>
<comment type="catalytic activity">
    <reaction evidence="1">
        <text>chorismate = 4-hydroxybenzoate + pyruvate</text>
        <dbReference type="Rhea" id="RHEA:16505"/>
        <dbReference type="ChEBI" id="CHEBI:15361"/>
        <dbReference type="ChEBI" id="CHEBI:17879"/>
        <dbReference type="ChEBI" id="CHEBI:29748"/>
        <dbReference type="EC" id="4.1.3.40"/>
    </reaction>
</comment>
<comment type="pathway">
    <text evidence="1">Cofactor biosynthesis; ubiquinone biosynthesis.</text>
</comment>
<comment type="subunit">
    <text evidence="1">Monomer.</text>
</comment>
<comment type="subcellular location">
    <subcellularLocation>
        <location evidence="1">Cytoplasm</location>
    </subcellularLocation>
</comment>
<comment type="similarity">
    <text evidence="1">Belongs to the UbiC family.</text>
</comment>
<reference key="1">
    <citation type="journal article" date="2001" name="Nature">
        <title>Complete genome sequence of a multiple drug resistant Salmonella enterica serovar Typhi CT18.</title>
        <authorList>
            <person name="Parkhill J."/>
            <person name="Dougan G."/>
            <person name="James K.D."/>
            <person name="Thomson N.R."/>
            <person name="Pickard D."/>
            <person name="Wain J."/>
            <person name="Churcher C.M."/>
            <person name="Mungall K.L."/>
            <person name="Bentley S.D."/>
            <person name="Holden M.T.G."/>
            <person name="Sebaihia M."/>
            <person name="Baker S."/>
            <person name="Basham D."/>
            <person name="Brooks K."/>
            <person name="Chillingworth T."/>
            <person name="Connerton P."/>
            <person name="Cronin A."/>
            <person name="Davis P."/>
            <person name="Davies R.M."/>
            <person name="Dowd L."/>
            <person name="White N."/>
            <person name="Farrar J."/>
            <person name="Feltwell T."/>
            <person name="Hamlin N."/>
            <person name="Haque A."/>
            <person name="Hien T.T."/>
            <person name="Holroyd S."/>
            <person name="Jagels K."/>
            <person name="Krogh A."/>
            <person name="Larsen T.S."/>
            <person name="Leather S."/>
            <person name="Moule S."/>
            <person name="O'Gaora P."/>
            <person name="Parry C."/>
            <person name="Quail M.A."/>
            <person name="Rutherford K.M."/>
            <person name="Simmonds M."/>
            <person name="Skelton J."/>
            <person name="Stevens K."/>
            <person name="Whitehead S."/>
            <person name="Barrell B.G."/>
        </authorList>
    </citation>
    <scope>NUCLEOTIDE SEQUENCE [LARGE SCALE GENOMIC DNA]</scope>
    <source>
        <strain>CT18</strain>
    </source>
</reference>
<reference key="2">
    <citation type="journal article" date="2003" name="J. Bacteriol.">
        <title>Comparative genomics of Salmonella enterica serovar Typhi strains Ty2 and CT18.</title>
        <authorList>
            <person name="Deng W."/>
            <person name="Liou S.-R."/>
            <person name="Plunkett G. III"/>
            <person name="Mayhew G.F."/>
            <person name="Rose D.J."/>
            <person name="Burland V."/>
            <person name="Kodoyianni V."/>
            <person name="Schwartz D.C."/>
            <person name="Blattner F.R."/>
        </authorList>
    </citation>
    <scope>NUCLEOTIDE SEQUENCE [LARGE SCALE GENOMIC DNA]</scope>
    <source>
        <strain>ATCC 700931 / Ty2</strain>
    </source>
</reference>
<sequence>MSHPALTQLRALRYFDAIPALEPHLLDWLLLEDSVTKRFEQQGKRVSVTLIREAFVGQSEVEEASGLLPSESRYWLREILLCADGEPWLAGRTVVPESTLCGPEQVLQHLGKTPLGRYLFTSSTLTRDFIEIGRDATLWGRRSRLRLSGKPLLLTELFLPASPLY</sequence>